<evidence type="ECO:0000255" key="1">
    <source>
        <dbReference type="HAMAP-Rule" id="MF_00020"/>
    </source>
</evidence>
<proteinExistence type="inferred from homology"/>
<organism>
    <name type="scientific">Microcystis aeruginosa (strain NIES-843 / IAM M-2473)</name>
    <dbReference type="NCBI Taxonomy" id="449447"/>
    <lineage>
        <taxon>Bacteria</taxon>
        <taxon>Bacillati</taxon>
        <taxon>Cyanobacteriota</taxon>
        <taxon>Cyanophyceae</taxon>
        <taxon>Oscillatoriophycideae</taxon>
        <taxon>Chroococcales</taxon>
        <taxon>Microcystaceae</taxon>
        <taxon>Microcystis</taxon>
    </lineage>
</organism>
<sequence length="401" mass="43596">MKILVLNAGSSSQKSCLYDLEFLPGHPPQPIWQAGIDWTVNPDYAVLTVKAQGIKQEINLSSQDRPAGIARMLDTLVTGETKVVANLADISIVGHRVVHGGTEYSQATMITPQVKETIKKLIPLAPSHNPAHLEGIEAIEQVLGDVPQVAVFDTAFHRSIPPESSLYPIPYQWSELGIRRYGFHGTSHQYCSQRAAELLGKPLESLKMVICHLGNGASLSAVKGGKSIDTTMGFTPLEGLMMGTRSGSIDPGILIYLEREYQYNPDSLNSLLNKESGLKGISGISGDMRAITTAMAEGNERAKLAFEMYIHRLKSLIGSMIASLEGLDVLVFTAGIGENSALVREKASQGWSFFGLELDLAKNAARPRDEDIASETSKVRVMVIATAEDWAIARECWHLSP</sequence>
<comment type="function">
    <text evidence="1">Catalyzes the formation of acetyl phosphate from acetate and ATP. Can also catalyze the reverse reaction.</text>
</comment>
<comment type="catalytic activity">
    <reaction evidence="1">
        <text>acetate + ATP = acetyl phosphate + ADP</text>
        <dbReference type="Rhea" id="RHEA:11352"/>
        <dbReference type="ChEBI" id="CHEBI:22191"/>
        <dbReference type="ChEBI" id="CHEBI:30089"/>
        <dbReference type="ChEBI" id="CHEBI:30616"/>
        <dbReference type="ChEBI" id="CHEBI:456216"/>
        <dbReference type="EC" id="2.7.2.1"/>
    </reaction>
</comment>
<comment type="cofactor">
    <cofactor evidence="1">
        <name>Mg(2+)</name>
        <dbReference type="ChEBI" id="CHEBI:18420"/>
    </cofactor>
    <cofactor evidence="1">
        <name>Mn(2+)</name>
        <dbReference type="ChEBI" id="CHEBI:29035"/>
    </cofactor>
    <text evidence="1">Mg(2+). Can also accept Mn(2+).</text>
</comment>
<comment type="pathway">
    <text evidence="1">Metabolic intermediate biosynthesis; acetyl-CoA biosynthesis; acetyl-CoA from acetate: step 1/2.</text>
</comment>
<comment type="subunit">
    <text evidence="1">Homodimer.</text>
</comment>
<comment type="subcellular location">
    <subcellularLocation>
        <location evidence="1">Cytoplasm</location>
    </subcellularLocation>
</comment>
<comment type="similarity">
    <text evidence="1">Belongs to the acetokinase family.</text>
</comment>
<protein>
    <recommendedName>
        <fullName evidence="1">Acetate kinase</fullName>
        <ecNumber evidence="1">2.7.2.1</ecNumber>
    </recommendedName>
    <alternativeName>
        <fullName evidence="1">Acetokinase</fullName>
    </alternativeName>
</protein>
<reference key="1">
    <citation type="journal article" date="2007" name="DNA Res.">
        <title>Complete genomic structure of the bloom-forming toxic cyanobacterium Microcystis aeruginosa NIES-843.</title>
        <authorList>
            <person name="Kaneko T."/>
            <person name="Nakajima N."/>
            <person name="Okamoto S."/>
            <person name="Suzuki I."/>
            <person name="Tanabe Y."/>
            <person name="Tamaoki M."/>
            <person name="Nakamura Y."/>
            <person name="Kasai F."/>
            <person name="Watanabe A."/>
            <person name="Kawashima K."/>
            <person name="Kishida Y."/>
            <person name="Ono A."/>
            <person name="Shimizu Y."/>
            <person name="Takahashi C."/>
            <person name="Minami C."/>
            <person name="Fujishiro T."/>
            <person name="Kohara M."/>
            <person name="Katoh M."/>
            <person name="Nakazaki N."/>
            <person name="Nakayama S."/>
            <person name="Yamada M."/>
            <person name="Tabata S."/>
            <person name="Watanabe M.M."/>
        </authorList>
    </citation>
    <scope>NUCLEOTIDE SEQUENCE [LARGE SCALE GENOMIC DNA]</scope>
    <source>
        <strain>NIES-843 / IAM M-247</strain>
    </source>
</reference>
<gene>
    <name evidence="1" type="primary">ackA</name>
    <name type="ordered locus">MAE_02800</name>
</gene>
<feature type="chain" id="PRO_1000074188" description="Acetate kinase">
    <location>
        <begin position="1"/>
        <end position="401"/>
    </location>
</feature>
<feature type="active site" description="Proton donor/acceptor" evidence="1">
    <location>
        <position position="153"/>
    </location>
</feature>
<feature type="binding site" evidence="1">
    <location>
        <position position="7"/>
    </location>
    <ligand>
        <name>Mg(2+)</name>
        <dbReference type="ChEBI" id="CHEBI:18420"/>
    </ligand>
</feature>
<feature type="binding site" evidence="1">
    <location>
        <position position="14"/>
    </location>
    <ligand>
        <name>ATP</name>
        <dbReference type="ChEBI" id="CHEBI:30616"/>
    </ligand>
</feature>
<feature type="binding site" evidence="1">
    <location>
        <position position="96"/>
    </location>
    <ligand>
        <name>substrate</name>
    </ligand>
</feature>
<feature type="binding site" evidence="1">
    <location>
        <begin position="212"/>
        <end position="216"/>
    </location>
    <ligand>
        <name>ATP</name>
        <dbReference type="ChEBI" id="CHEBI:30616"/>
    </ligand>
</feature>
<feature type="binding site" evidence="1">
    <location>
        <begin position="287"/>
        <end position="289"/>
    </location>
    <ligand>
        <name>ATP</name>
        <dbReference type="ChEBI" id="CHEBI:30616"/>
    </ligand>
</feature>
<feature type="binding site" evidence="1">
    <location>
        <begin position="335"/>
        <end position="339"/>
    </location>
    <ligand>
        <name>ATP</name>
        <dbReference type="ChEBI" id="CHEBI:30616"/>
    </ligand>
</feature>
<feature type="binding site" evidence="1">
    <location>
        <position position="388"/>
    </location>
    <ligand>
        <name>Mg(2+)</name>
        <dbReference type="ChEBI" id="CHEBI:18420"/>
    </ligand>
</feature>
<feature type="site" description="Transition state stabilizer" evidence="1">
    <location>
        <position position="184"/>
    </location>
</feature>
<feature type="site" description="Transition state stabilizer" evidence="1">
    <location>
        <position position="245"/>
    </location>
</feature>
<name>ACKA_MICAN</name>
<keyword id="KW-0067">ATP-binding</keyword>
<keyword id="KW-0963">Cytoplasm</keyword>
<keyword id="KW-0418">Kinase</keyword>
<keyword id="KW-0460">Magnesium</keyword>
<keyword id="KW-0479">Metal-binding</keyword>
<keyword id="KW-0547">Nucleotide-binding</keyword>
<keyword id="KW-0808">Transferase</keyword>
<accession>B0JMT8</accession>
<dbReference type="EC" id="2.7.2.1" evidence="1"/>
<dbReference type="EMBL" id="AP009552">
    <property type="protein sequence ID" value="BAG00102.1"/>
    <property type="molecule type" value="Genomic_DNA"/>
</dbReference>
<dbReference type="RefSeq" id="WP_002797653.1">
    <property type="nucleotide sequence ID" value="NC_010296.1"/>
</dbReference>
<dbReference type="SMR" id="B0JMT8"/>
<dbReference type="STRING" id="449447.MAE_02800"/>
<dbReference type="PaxDb" id="449447-MAE_02800"/>
<dbReference type="EnsemblBacteria" id="BAG00102">
    <property type="protein sequence ID" value="BAG00102"/>
    <property type="gene ID" value="MAE_02800"/>
</dbReference>
<dbReference type="KEGG" id="mar:MAE_02800"/>
<dbReference type="eggNOG" id="COG0282">
    <property type="taxonomic scope" value="Bacteria"/>
</dbReference>
<dbReference type="HOGENOM" id="CLU_020352_0_1_3"/>
<dbReference type="BioCyc" id="MAER449447:MAE_RS01265-MONOMER"/>
<dbReference type="UniPathway" id="UPA00340">
    <property type="reaction ID" value="UER00458"/>
</dbReference>
<dbReference type="Proteomes" id="UP000001510">
    <property type="component" value="Chromosome"/>
</dbReference>
<dbReference type="GO" id="GO:0005737">
    <property type="term" value="C:cytoplasm"/>
    <property type="evidence" value="ECO:0007669"/>
    <property type="project" value="UniProtKB-SubCell"/>
</dbReference>
<dbReference type="GO" id="GO:0008776">
    <property type="term" value="F:acetate kinase activity"/>
    <property type="evidence" value="ECO:0007669"/>
    <property type="project" value="UniProtKB-UniRule"/>
</dbReference>
<dbReference type="GO" id="GO:0005524">
    <property type="term" value="F:ATP binding"/>
    <property type="evidence" value="ECO:0007669"/>
    <property type="project" value="UniProtKB-KW"/>
</dbReference>
<dbReference type="GO" id="GO:0000287">
    <property type="term" value="F:magnesium ion binding"/>
    <property type="evidence" value="ECO:0007669"/>
    <property type="project" value="UniProtKB-UniRule"/>
</dbReference>
<dbReference type="GO" id="GO:0006083">
    <property type="term" value="P:acetate metabolic process"/>
    <property type="evidence" value="ECO:0007669"/>
    <property type="project" value="TreeGrafter"/>
</dbReference>
<dbReference type="GO" id="GO:0006085">
    <property type="term" value="P:acetyl-CoA biosynthetic process"/>
    <property type="evidence" value="ECO:0007669"/>
    <property type="project" value="UniProtKB-UniRule"/>
</dbReference>
<dbReference type="CDD" id="cd24010">
    <property type="entry name" value="ASKHA_NBD_AcK_PK"/>
    <property type="match status" value="1"/>
</dbReference>
<dbReference type="Gene3D" id="3.30.420.40">
    <property type="match status" value="2"/>
</dbReference>
<dbReference type="HAMAP" id="MF_00020">
    <property type="entry name" value="Acetate_kinase"/>
    <property type="match status" value="1"/>
</dbReference>
<dbReference type="InterPro" id="IPR004372">
    <property type="entry name" value="Ac/propionate_kinase"/>
</dbReference>
<dbReference type="InterPro" id="IPR000890">
    <property type="entry name" value="Aliphatic_acid_kin_short-chain"/>
</dbReference>
<dbReference type="InterPro" id="IPR023865">
    <property type="entry name" value="Aliphatic_acid_kinase_CS"/>
</dbReference>
<dbReference type="InterPro" id="IPR043129">
    <property type="entry name" value="ATPase_NBD"/>
</dbReference>
<dbReference type="NCBIfam" id="TIGR00016">
    <property type="entry name" value="ackA"/>
    <property type="match status" value="1"/>
</dbReference>
<dbReference type="PANTHER" id="PTHR21060">
    <property type="entry name" value="ACETATE KINASE"/>
    <property type="match status" value="1"/>
</dbReference>
<dbReference type="PANTHER" id="PTHR21060:SF15">
    <property type="entry name" value="ACETATE KINASE-RELATED"/>
    <property type="match status" value="1"/>
</dbReference>
<dbReference type="Pfam" id="PF00871">
    <property type="entry name" value="Acetate_kinase"/>
    <property type="match status" value="1"/>
</dbReference>
<dbReference type="PIRSF" id="PIRSF000722">
    <property type="entry name" value="Acetate_prop_kin"/>
    <property type="match status" value="1"/>
</dbReference>
<dbReference type="PRINTS" id="PR00471">
    <property type="entry name" value="ACETATEKNASE"/>
</dbReference>
<dbReference type="SUPFAM" id="SSF53067">
    <property type="entry name" value="Actin-like ATPase domain"/>
    <property type="match status" value="2"/>
</dbReference>
<dbReference type="PROSITE" id="PS01075">
    <property type="entry name" value="ACETATE_KINASE_1"/>
    <property type="match status" value="1"/>
</dbReference>
<dbReference type="PROSITE" id="PS01076">
    <property type="entry name" value="ACETATE_KINASE_2"/>
    <property type="match status" value="1"/>
</dbReference>